<dbReference type="EMBL" id="AK173168">
    <property type="protein sequence ID" value="BAD32446.1"/>
    <property type="status" value="ALT_INIT"/>
    <property type="molecule type" value="mRNA"/>
</dbReference>
<dbReference type="EMBL" id="AL591884">
    <property type="status" value="NOT_ANNOTATED_CDS"/>
    <property type="molecule type" value="Genomic_DNA"/>
</dbReference>
<dbReference type="EMBL" id="AL732357">
    <property type="status" value="NOT_ANNOTATED_CDS"/>
    <property type="molecule type" value="Genomic_DNA"/>
</dbReference>
<dbReference type="EMBL" id="AK090301">
    <property type="protein sequence ID" value="BAC41161.1"/>
    <property type="molecule type" value="mRNA"/>
</dbReference>
<dbReference type="EMBL" id="BC057617">
    <property type="protein sequence ID" value="AAH57617.1"/>
    <property type="molecule type" value="mRNA"/>
</dbReference>
<dbReference type="CCDS" id="CCDS38334.1">
    <molecule id="Q69ZK0-1"/>
</dbReference>
<dbReference type="RefSeq" id="NP_808450.2">
    <molecule id="Q69ZK0-1"/>
    <property type="nucleotide sequence ID" value="NM_177782.3"/>
</dbReference>
<dbReference type="SMR" id="Q69ZK0"/>
<dbReference type="BioGRID" id="234934">
    <property type="interactions" value="7"/>
</dbReference>
<dbReference type="FunCoup" id="Q69ZK0">
    <property type="interactions" value="884"/>
</dbReference>
<dbReference type="IntAct" id="Q69ZK0">
    <property type="interactions" value="3"/>
</dbReference>
<dbReference type="STRING" id="10090.ENSMUSP00000037180"/>
<dbReference type="GlyGen" id="Q69ZK0">
    <property type="glycosylation" value="1 site, 1 N-linked glycan (1 site)"/>
</dbReference>
<dbReference type="iPTMnet" id="Q69ZK0"/>
<dbReference type="PhosphoSitePlus" id="Q69ZK0"/>
<dbReference type="SwissPalm" id="Q69ZK0"/>
<dbReference type="jPOST" id="Q69ZK0"/>
<dbReference type="PaxDb" id="10090-ENSMUSP00000037180"/>
<dbReference type="PeptideAtlas" id="Q69ZK0"/>
<dbReference type="ProteomicsDB" id="291650">
    <molecule id="Q69ZK0-1"/>
</dbReference>
<dbReference type="ProteomicsDB" id="291651">
    <molecule id="Q69ZK0-2"/>
</dbReference>
<dbReference type="Antibodypedia" id="1100">
    <property type="antibodies" value="245 antibodies from 34 providers"/>
</dbReference>
<dbReference type="Ensembl" id="ENSMUST00000036719.12">
    <molecule id="Q69ZK0-1"/>
    <property type="protein sequence ID" value="ENSMUSP00000037180.6"/>
    <property type="gene ID" value="ENSMUSG00000039621.14"/>
</dbReference>
<dbReference type="Ensembl" id="ENSMUST00000109246.2">
    <molecule id="Q69ZK0-2"/>
    <property type="protein sequence ID" value="ENSMUSP00000104869.2"/>
    <property type="gene ID" value="ENSMUSG00000039621.14"/>
</dbReference>
<dbReference type="GeneID" id="277360"/>
<dbReference type="KEGG" id="mmu:277360"/>
<dbReference type="UCSC" id="uc008nym.1">
    <molecule id="Q69ZK0-2"/>
    <property type="organism name" value="mouse"/>
</dbReference>
<dbReference type="UCSC" id="uc008nyn.1">
    <molecule id="Q69ZK0-1"/>
    <property type="organism name" value="mouse"/>
</dbReference>
<dbReference type="AGR" id="MGI:3040696"/>
<dbReference type="CTD" id="57580"/>
<dbReference type="MGI" id="MGI:3040696">
    <property type="gene designation" value="Prex1"/>
</dbReference>
<dbReference type="VEuPathDB" id="HostDB:ENSMUSG00000039621"/>
<dbReference type="eggNOG" id="KOG3519">
    <property type="taxonomic scope" value="Eukaryota"/>
</dbReference>
<dbReference type="GeneTree" id="ENSGT00940000159925"/>
<dbReference type="HOGENOM" id="CLU_003935_0_0_1"/>
<dbReference type="InParanoid" id="Q69ZK0"/>
<dbReference type="OMA" id="TMPHYEF"/>
<dbReference type="OrthoDB" id="660555at2759"/>
<dbReference type="PhylomeDB" id="Q69ZK0"/>
<dbReference type="TreeFam" id="TF328639"/>
<dbReference type="Reactome" id="R-MMU-193648">
    <property type="pathway name" value="NRAGE signals death through JNK"/>
</dbReference>
<dbReference type="Reactome" id="R-MMU-416482">
    <property type="pathway name" value="G alpha (12/13) signalling events"/>
</dbReference>
<dbReference type="Reactome" id="R-MMU-8980692">
    <property type="pathway name" value="RHOA GTPase cycle"/>
</dbReference>
<dbReference type="Reactome" id="R-MMU-9013026">
    <property type="pathway name" value="RHOB GTPase cycle"/>
</dbReference>
<dbReference type="Reactome" id="R-MMU-9013106">
    <property type="pathway name" value="RHOC GTPase cycle"/>
</dbReference>
<dbReference type="Reactome" id="R-MMU-9013148">
    <property type="pathway name" value="CDC42 GTPase cycle"/>
</dbReference>
<dbReference type="Reactome" id="R-MMU-9013149">
    <property type="pathway name" value="RAC1 GTPase cycle"/>
</dbReference>
<dbReference type="Reactome" id="R-MMU-9013404">
    <property type="pathway name" value="RAC2 GTPase cycle"/>
</dbReference>
<dbReference type="Reactome" id="R-MMU-9013406">
    <property type="pathway name" value="RHOQ GTPase cycle"/>
</dbReference>
<dbReference type="Reactome" id="R-MMU-9013408">
    <property type="pathway name" value="RHOG GTPase cycle"/>
</dbReference>
<dbReference type="Reactome" id="R-MMU-9013409">
    <property type="pathway name" value="RHOJ GTPase cycle"/>
</dbReference>
<dbReference type="Reactome" id="R-MMU-9013423">
    <property type="pathway name" value="RAC3 GTPase cycle"/>
</dbReference>
<dbReference type="BioGRID-ORCS" id="277360">
    <property type="hits" value="7 hits in 78 CRISPR screens"/>
</dbReference>
<dbReference type="ChiTaRS" id="Prex1">
    <property type="organism name" value="mouse"/>
</dbReference>
<dbReference type="PRO" id="PR:Q69ZK0"/>
<dbReference type="Proteomes" id="UP000000589">
    <property type="component" value="Chromosome 2"/>
</dbReference>
<dbReference type="RNAct" id="Q69ZK0">
    <property type="molecule type" value="protein"/>
</dbReference>
<dbReference type="Bgee" id="ENSMUSG00000039621">
    <property type="expression patterns" value="Expressed in granulocyte and 232 other cell types or tissues"/>
</dbReference>
<dbReference type="ExpressionAtlas" id="Q69ZK0">
    <property type="expression patterns" value="baseline and differential"/>
</dbReference>
<dbReference type="GO" id="GO:0005829">
    <property type="term" value="C:cytosol"/>
    <property type="evidence" value="ECO:0007669"/>
    <property type="project" value="UniProtKB-SubCell"/>
</dbReference>
<dbReference type="GO" id="GO:0043198">
    <property type="term" value="C:dendritic shaft"/>
    <property type="evidence" value="ECO:0007669"/>
    <property type="project" value="Ensembl"/>
</dbReference>
<dbReference type="GO" id="GO:0030426">
    <property type="term" value="C:growth cone"/>
    <property type="evidence" value="ECO:0007669"/>
    <property type="project" value="Ensembl"/>
</dbReference>
<dbReference type="GO" id="GO:0048471">
    <property type="term" value="C:perinuclear region of cytoplasm"/>
    <property type="evidence" value="ECO:0007669"/>
    <property type="project" value="Ensembl"/>
</dbReference>
<dbReference type="GO" id="GO:0005886">
    <property type="term" value="C:plasma membrane"/>
    <property type="evidence" value="ECO:0007669"/>
    <property type="project" value="UniProtKB-SubCell"/>
</dbReference>
<dbReference type="GO" id="GO:0005085">
    <property type="term" value="F:guanyl-nucleotide exchange factor activity"/>
    <property type="evidence" value="ECO:0007669"/>
    <property type="project" value="UniProtKB-KW"/>
</dbReference>
<dbReference type="GO" id="GO:0005543">
    <property type="term" value="F:phospholipid binding"/>
    <property type="evidence" value="ECO:0007669"/>
    <property type="project" value="Ensembl"/>
</dbReference>
<dbReference type="GO" id="GO:0007186">
    <property type="term" value="P:G protein-coupled receptor signaling pathway"/>
    <property type="evidence" value="ECO:0000316"/>
    <property type="project" value="MGI"/>
</dbReference>
<dbReference type="GO" id="GO:0035556">
    <property type="term" value="P:intracellular signal transduction"/>
    <property type="evidence" value="ECO:0007669"/>
    <property type="project" value="InterPro"/>
</dbReference>
<dbReference type="GO" id="GO:0030593">
    <property type="term" value="P:neutrophil chemotaxis"/>
    <property type="evidence" value="ECO:0000316"/>
    <property type="project" value="MGI"/>
</dbReference>
<dbReference type="GO" id="GO:0045785">
    <property type="term" value="P:positive regulation of cell adhesion"/>
    <property type="evidence" value="ECO:0000316"/>
    <property type="project" value="MGI"/>
</dbReference>
<dbReference type="GO" id="GO:0030335">
    <property type="term" value="P:positive regulation of cell migration"/>
    <property type="evidence" value="ECO:0007669"/>
    <property type="project" value="Ensembl"/>
</dbReference>
<dbReference type="GO" id="GO:1900026">
    <property type="term" value="P:positive regulation of substrate adhesion-dependent cell spreading"/>
    <property type="evidence" value="ECO:0000316"/>
    <property type="project" value="MGI"/>
</dbReference>
<dbReference type="GO" id="GO:0072593">
    <property type="term" value="P:reactive oxygen species metabolic process"/>
    <property type="evidence" value="ECO:0000316"/>
    <property type="project" value="MGI"/>
</dbReference>
<dbReference type="GO" id="GO:0030833">
    <property type="term" value="P:regulation of actin filament polymerization"/>
    <property type="evidence" value="ECO:0007669"/>
    <property type="project" value="Ensembl"/>
</dbReference>
<dbReference type="GO" id="GO:0050773">
    <property type="term" value="P:regulation of dendrite development"/>
    <property type="evidence" value="ECO:0007669"/>
    <property type="project" value="Ensembl"/>
</dbReference>
<dbReference type="GO" id="GO:0030217">
    <property type="term" value="P:T cell differentiation"/>
    <property type="evidence" value="ECO:0000316"/>
    <property type="project" value="MGI"/>
</dbReference>
<dbReference type="CDD" id="cd04440">
    <property type="entry name" value="DEP_2_P-Rex"/>
    <property type="match status" value="1"/>
</dbReference>
<dbReference type="CDD" id="cd01224">
    <property type="entry name" value="PH_Collybistin_ASEF"/>
    <property type="match status" value="1"/>
</dbReference>
<dbReference type="CDD" id="cd00160">
    <property type="entry name" value="RhoGEF"/>
    <property type="match status" value="1"/>
</dbReference>
<dbReference type="FunFam" id="2.30.29.30:FF:000055">
    <property type="entry name" value="Phosphatidylinositol 3,4,5-trisphosphate-dependent Rac exchanger 1 protein-like"/>
    <property type="match status" value="1"/>
</dbReference>
<dbReference type="FunFam" id="1.20.900.10:FF:000018">
    <property type="entry name" value="Phosphatidylinositol-3,4, 5-trisphosphate-dependent Rac exchange factor 2, putative"/>
    <property type="match status" value="1"/>
</dbReference>
<dbReference type="FunFam" id="1.10.10.10:FF:000090">
    <property type="entry name" value="Phosphatidylinositol-3,4,5-trisphosphate dependent Rac exchange factor 1"/>
    <property type="match status" value="1"/>
</dbReference>
<dbReference type="FunFam" id="1.10.10.10:FF:000094">
    <property type="entry name" value="Phosphatidylinositol-3,4,5-trisphosphate dependent Rac exchange factor 1"/>
    <property type="match status" value="1"/>
</dbReference>
<dbReference type="FunFam" id="2.30.42.10:FF:000099">
    <property type="entry name" value="Phosphatidylinositol-3,4,5-trisphosphate dependent Rac exchange factor 1"/>
    <property type="match status" value="1"/>
</dbReference>
<dbReference type="FunFam" id="2.30.42.10:FF:000141">
    <property type="entry name" value="Phosphatidylinositol-3,4,5-trisphosphate dependent Rac exchange factor 1"/>
    <property type="match status" value="1"/>
</dbReference>
<dbReference type="Gene3D" id="2.30.42.10">
    <property type="match status" value="2"/>
</dbReference>
<dbReference type="Gene3D" id="1.20.900.10">
    <property type="entry name" value="Dbl homology (DH) domain"/>
    <property type="match status" value="1"/>
</dbReference>
<dbReference type="Gene3D" id="2.30.29.30">
    <property type="entry name" value="Pleckstrin-homology domain (PH domain)/Phosphotyrosine-binding domain (PTB)"/>
    <property type="match status" value="1"/>
</dbReference>
<dbReference type="Gene3D" id="1.10.10.10">
    <property type="entry name" value="Winged helix-like DNA-binding domain superfamily/Winged helix DNA-binding domain"/>
    <property type="match status" value="2"/>
</dbReference>
<dbReference type="InterPro" id="IPR035899">
    <property type="entry name" value="DBL_dom_sf"/>
</dbReference>
<dbReference type="InterPro" id="IPR000591">
    <property type="entry name" value="DEP_dom"/>
</dbReference>
<dbReference type="InterPro" id="IPR000219">
    <property type="entry name" value="DH_dom"/>
</dbReference>
<dbReference type="InterPro" id="IPR001331">
    <property type="entry name" value="GDS_CDC24_CS"/>
</dbReference>
<dbReference type="InterPro" id="IPR051832">
    <property type="entry name" value="mTOR-Rac_regulators"/>
</dbReference>
<dbReference type="InterPro" id="IPR001478">
    <property type="entry name" value="PDZ"/>
</dbReference>
<dbReference type="InterPro" id="IPR036034">
    <property type="entry name" value="PDZ_sf"/>
</dbReference>
<dbReference type="InterPro" id="IPR011993">
    <property type="entry name" value="PH-like_dom_sf"/>
</dbReference>
<dbReference type="InterPro" id="IPR001849">
    <property type="entry name" value="PH_domain"/>
</dbReference>
<dbReference type="InterPro" id="IPR055251">
    <property type="entry name" value="SOS1_NGEF_PH"/>
</dbReference>
<dbReference type="InterPro" id="IPR036388">
    <property type="entry name" value="WH-like_DNA-bd_sf"/>
</dbReference>
<dbReference type="InterPro" id="IPR036390">
    <property type="entry name" value="WH_DNA-bd_sf"/>
</dbReference>
<dbReference type="PANTHER" id="PTHR22829">
    <property type="entry name" value="DEP DOMAIN PROTEIN"/>
    <property type="match status" value="1"/>
</dbReference>
<dbReference type="PANTHER" id="PTHR22829:SF6">
    <property type="entry name" value="PHOSPHATIDYLINOSITOL 3,4,5-TRISPHOSPHATE-DEPENDENT RAC EXCHANGER 1 PROTEIN"/>
    <property type="match status" value="1"/>
</dbReference>
<dbReference type="Pfam" id="PF00610">
    <property type="entry name" value="DEP"/>
    <property type="match status" value="2"/>
</dbReference>
<dbReference type="Pfam" id="PF00621">
    <property type="entry name" value="RhoGEF"/>
    <property type="match status" value="1"/>
</dbReference>
<dbReference type="Pfam" id="PF22697">
    <property type="entry name" value="SOS1_NGEF_PH"/>
    <property type="match status" value="1"/>
</dbReference>
<dbReference type="SMART" id="SM00049">
    <property type="entry name" value="DEP"/>
    <property type="match status" value="2"/>
</dbReference>
<dbReference type="SMART" id="SM00228">
    <property type="entry name" value="PDZ"/>
    <property type="match status" value="2"/>
</dbReference>
<dbReference type="SMART" id="SM00233">
    <property type="entry name" value="PH"/>
    <property type="match status" value="1"/>
</dbReference>
<dbReference type="SMART" id="SM00325">
    <property type="entry name" value="RhoGEF"/>
    <property type="match status" value="1"/>
</dbReference>
<dbReference type="SUPFAM" id="SSF48065">
    <property type="entry name" value="DBL homology domain (DH-domain)"/>
    <property type="match status" value="1"/>
</dbReference>
<dbReference type="SUPFAM" id="SSF50156">
    <property type="entry name" value="PDZ domain-like"/>
    <property type="match status" value="2"/>
</dbReference>
<dbReference type="SUPFAM" id="SSF50729">
    <property type="entry name" value="PH domain-like"/>
    <property type="match status" value="1"/>
</dbReference>
<dbReference type="SUPFAM" id="SSF46785">
    <property type="entry name" value="Winged helix' DNA-binding domain"/>
    <property type="match status" value="2"/>
</dbReference>
<dbReference type="PROSITE" id="PS50186">
    <property type="entry name" value="DEP"/>
    <property type="match status" value="2"/>
</dbReference>
<dbReference type="PROSITE" id="PS00741">
    <property type="entry name" value="DH_1"/>
    <property type="match status" value="1"/>
</dbReference>
<dbReference type="PROSITE" id="PS50010">
    <property type="entry name" value="DH_2"/>
    <property type="match status" value="1"/>
</dbReference>
<dbReference type="PROSITE" id="PS50106">
    <property type="entry name" value="PDZ"/>
    <property type="match status" value="1"/>
</dbReference>
<dbReference type="PROSITE" id="PS50003">
    <property type="entry name" value="PH_DOMAIN"/>
    <property type="match status" value="1"/>
</dbReference>
<reference key="1">
    <citation type="journal article" date="2004" name="DNA Res.">
        <title>Prediction of the coding sequences of mouse homologues of KIAA gene: IV. The complete nucleotide sequences of 500 mouse KIAA-homologous cDNAs identified by screening of terminal sequences of cDNA clones randomly sampled from size-fractionated libraries.</title>
        <authorList>
            <person name="Okazaki N."/>
            <person name="Kikuno R."/>
            <person name="Ohara R."/>
            <person name="Inamoto S."/>
            <person name="Koseki H."/>
            <person name="Hiraoka S."/>
            <person name="Saga Y."/>
            <person name="Seino S."/>
            <person name="Nishimura M."/>
            <person name="Kaisho T."/>
            <person name="Hoshino K."/>
            <person name="Kitamura H."/>
            <person name="Nagase T."/>
            <person name="Ohara O."/>
            <person name="Koga H."/>
        </authorList>
    </citation>
    <scope>NUCLEOTIDE SEQUENCE [LARGE SCALE MRNA] (ISOFORM 1)</scope>
    <source>
        <tissue>Pancreatic islet</tissue>
    </source>
</reference>
<reference key="2">
    <citation type="journal article" date="2009" name="PLoS Biol.">
        <title>Lineage-specific biology revealed by a finished genome assembly of the mouse.</title>
        <authorList>
            <person name="Church D.M."/>
            <person name="Goodstadt L."/>
            <person name="Hillier L.W."/>
            <person name="Zody M.C."/>
            <person name="Goldstein S."/>
            <person name="She X."/>
            <person name="Bult C.J."/>
            <person name="Agarwala R."/>
            <person name="Cherry J.L."/>
            <person name="DiCuccio M."/>
            <person name="Hlavina W."/>
            <person name="Kapustin Y."/>
            <person name="Meric P."/>
            <person name="Maglott D."/>
            <person name="Birtle Z."/>
            <person name="Marques A.C."/>
            <person name="Graves T."/>
            <person name="Zhou S."/>
            <person name="Teague B."/>
            <person name="Potamousis K."/>
            <person name="Churas C."/>
            <person name="Place M."/>
            <person name="Herschleb J."/>
            <person name="Runnheim R."/>
            <person name="Forrest D."/>
            <person name="Amos-Landgraf J."/>
            <person name="Schwartz D.C."/>
            <person name="Cheng Z."/>
            <person name="Lindblad-Toh K."/>
            <person name="Eichler E.E."/>
            <person name="Ponting C.P."/>
        </authorList>
    </citation>
    <scope>NUCLEOTIDE SEQUENCE [LARGE SCALE GENOMIC DNA]</scope>
    <source>
        <strain>C57BL/6J</strain>
    </source>
</reference>
<reference key="3">
    <citation type="journal article" date="2005" name="Science">
        <title>The transcriptional landscape of the mammalian genome.</title>
        <authorList>
            <person name="Carninci P."/>
            <person name="Kasukawa T."/>
            <person name="Katayama S."/>
            <person name="Gough J."/>
            <person name="Frith M.C."/>
            <person name="Maeda N."/>
            <person name="Oyama R."/>
            <person name="Ravasi T."/>
            <person name="Lenhard B."/>
            <person name="Wells C."/>
            <person name="Kodzius R."/>
            <person name="Shimokawa K."/>
            <person name="Bajic V.B."/>
            <person name="Brenner S.E."/>
            <person name="Batalov S."/>
            <person name="Forrest A.R."/>
            <person name="Zavolan M."/>
            <person name="Davis M.J."/>
            <person name="Wilming L.G."/>
            <person name="Aidinis V."/>
            <person name="Allen J.E."/>
            <person name="Ambesi-Impiombato A."/>
            <person name="Apweiler R."/>
            <person name="Aturaliya R.N."/>
            <person name="Bailey T.L."/>
            <person name="Bansal M."/>
            <person name="Baxter L."/>
            <person name="Beisel K.W."/>
            <person name="Bersano T."/>
            <person name="Bono H."/>
            <person name="Chalk A.M."/>
            <person name="Chiu K.P."/>
            <person name="Choudhary V."/>
            <person name="Christoffels A."/>
            <person name="Clutterbuck D.R."/>
            <person name="Crowe M.L."/>
            <person name="Dalla E."/>
            <person name="Dalrymple B.P."/>
            <person name="de Bono B."/>
            <person name="Della Gatta G."/>
            <person name="di Bernardo D."/>
            <person name="Down T."/>
            <person name="Engstrom P."/>
            <person name="Fagiolini M."/>
            <person name="Faulkner G."/>
            <person name="Fletcher C.F."/>
            <person name="Fukushima T."/>
            <person name="Furuno M."/>
            <person name="Futaki S."/>
            <person name="Gariboldi M."/>
            <person name="Georgii-Hemming P."/>
            <person name="Gingeras T.R."/>
            <person name="Gojobori T."/>
            <person name="Green R.E."/>
            <person name="Gustincich S."/>
            <person name="Harbers M."/>
            <person name="Hayashi Y."/>
            <person name="Hensch T.K."/>
            <person name="Hirokawa N."/>
            <person name="Hill D."/>
            <person name="Huminiecki L."/>
            <person name="Iacono M."/>
            <person name="Ikeo K."/>
            <person name="Iwama A."/>
            <person name="Ishikawa T."/>
            <person name="Jakt M."/>
            <person name="Kanapin A."/>
            <person name="Katoh M."/>
            <person name="Kawasawa Y."/>
            <person name="Kelso J."/>
            <person name="Kitamura H."/>
            <person name="Kitano H."/>
            <person name="Kollias G."/>
            <person name="Krishnan S.P."/>
            <person name="Kruger A."/>
            <person name="Kummerfeld S.K."/>
            <person name="Kurochkin I.V."/>
            <person name="Lareau L.F."/>
            <person name="Lazarevic D."/>
            <person name="Lipovich L."/>
            <person name="Liu J."/>
            <person name="Liuni S."/>
            <person name="McWilliam S."/>
            <person name="Madan Babu M."/>
            <person name="Madera M."/>
            <person name="Marchionni L."/>
            <person name="Matsuda H."/>
            <person name="Matsuzawa S."/>
            <person name="Miki H."/>
            <person name="Mignone F."/>
            <person name="Miyake S."/>
            <person name="Morris K."/>
            <person name="Mottagui-Tabar S."/>
            <person name="Mulder N."/>
            <person name="Nakano N."/>
            <person name="Nakauchi H."/>
            <person name="Ng P."/>
            <person name="Nilsson R."/>
            <person name="Nishiguchi S."/>
            <person name="Nishikawa S."/>
            <person name="Nori F."/>
            <person name="Ohara O."/>
            <person name="Okazaki Y."/>
            <person name="Orlando V."/>
            <person name="Pang K.C."/>
            <person name="Pavan W.J."/>
            <person name="Pavesi G."/>
            <person name="Pesole G."/>
            <person name="Petrovsky N."/>
            <person name="Piazza S."/>
            <person name="Reed J."/>
            <person name="Reid J.F."/>
            <person name="Ring B.Z."/>
            <person name="Ringwald M."/>
            <person name="Rost B."/>
            <person name="Ruan Y."/>
            <person name="Salzberg S.L."/>
            <person name="Sandelin A."/>
            <person name="Schneider C."/>
            <person name="Schoenbach C."/>
            <person name="Sekiguchi K."/>
            <person name="Semple C.A."/>
            <person name="Seno S."/>
            <person name="Sessa L."/>
            <person name="Sheng Y."/>
            <person name="Shibata Y."/>
            <person name="Shimada H."/>
            <person name="Shimada K."/>
            <person name="Silva D."/>
            <person name="Sinclair B."/>
            <person name="Sperling S."/>
            <person name="Stupka E."/>
            <person name="Sugiura K."/>
            <person name="Sultana R."/>
            <person name="Takenaka Y."/>
            <person name="Taki K."/>
            <person name="Tammoja K."/>
            <person name="Tan S.L."/>
            <person name="Tang S."/>
            <person name="Taylor M.S."/>
            <person name="Tegner J."/>
            <person name="Teichmann S.A."/>
            <person name="Ueda H.R."/>
            <person name="van Nimwegen E."/>
            <person name="Verardo R."/>
            <person name="Wei C.L."/>
            <person name="Yagi K."/>
            <person name="Yamanishi H."/>
            <person name="Zabarovsky E."/>
            <person name="Zhu S."/>
            <person name="Zimmer A."/>
            <person name="Hide W."/>
            <person name="Bult C."/>
            <person name="Grimmond S.M."/>
            <person name="Teasdale R.D."/>
            <person name="Liu E.T."/>
            <person name="Brusic V."/>
            <person name="Quackenbush J."/>
            <person name="Wahlestedt C."/>
            <person name="Mattick J.S."/>
            <person name="Hume D.A."/>
            <person name="Kai C."/>
            <person name="Sasaki D."/>
            <person name="Tomaru Y."/>
            <person name="Fukuda S."/>
            <person name="Kanamori-Katayama M."/>
            <person name="Suzuki M."/>
            <person name="Aoki J."/>
            <person name="Arakawa T."/>
            <person name="Iida J."/>
            <person name="Imamura K."/>
            <person name="Itoh M."/>
            <person name="Kato T."/>
            <person name="Kawaji H."/>
            <person name="Kawagashira N."/>
            <person name="Kawashima T."/>
            <person name="Kojima M."/>
            <person name="Kondo S."/>
            <person name="Konno H."/>
            <person name="Nakano K."/>
            <person name="Ninomiya N."/>
            <person name="Nishio T."/>
            <person name="Okada M."/>
            <person name="Plessy C."/>
            <person name="Shibata K."/>
            <person name="Shiraki T."/>
            <person name="Suzuki S."/>
            <person name="Tagami M."/>
            <person name="Waki K."/>
            <person name="Watahiki A."/>
            <person name="Okamura-Oho Y."/>
            <person name="Suzuki H."/>
            <person name="Kawai J."/>
            <person name="Hayashizaki Y."/>
        </authorList>
    </citation>
    <scope>NUCLEOTIDE SEQUENCE [LARGE SCALE MRNA] (ISOFORM 2)</scope>
    <source>
        <strain>C57BL/6J</strain>
        <tissue>Ovary</tissue>
        <tissue>Uterus</tissue>
    </source>
</reference>
<reference key="4">
    <citation type="journal article" date="2004" name="Genome Res.">
        <title>The status, quality, and expansion of the NIH full-length cDNA project: the Mammalian Gene Collection (MGC).</title>
        <authorList>
            <consortium name="The MGC Project Team"/>
        </authorList>
    </citation>
    <scope>NUCLEOTIDE SEQUENCE [LARGE SCALE MRNA] OF 1144-1650 (ISOFORM 1)</scope>
    <source>
        <strain>C57BL/6J</strain>
        <tissue>Fetal brain</tissue>
    </source>
</reference>
<reference key="5">
    <citation type="journal article" date="2005" name="Curr. Biol.">
        <title>P-Rex1 is a primary Rac2 guanine nucleotide exchange factor in mouse neutrophils.</title>
        <authorList>
            <person name="Dong X."/>
            <person name="Mo Z."/>
            <person name="Bokoch G."/>
            <person name="Guo C."/>
            <person name="Li Z."/>
            <person name="Wu D."/>
        </authorList>
    </citation>
    <scope>FUNCTION</scope>
    <scope>INTERACTION WITH RAC1 AND RAC2</scope>
</reference>
<reference key="6">
    <citation type="journal article" date="2010" name="Cell">
        <title>A tissue-specific atlas of mouse protein phosphorylation and expression.</title>
        <authorList>
            <person name="Huttlin E.L."/>
            <person name="Jedrychowski M.P."/>
            <person name="Elias J.E."/>
            <person name="Goswami T."/>
            <person name="Rad R."/>
            <person name="Beausoleil S.A."/>
            <person name="Villen J."/>
            <person name="Haas W."/>
            <person name="Sowa M.E."/>
            <person name="Gygi S.P."/>
        </authorList>
    </citation>
    <scope>PHOSPHORYLATION [LARGE SCALE ANALYSIS] AT SER-991; SER-1186 AND SER-1191</scope>
    <scope>IDENTIFICATION BY MASS SPECTROMETRY [LARGE SCALE ANALYSIS]</scope>
    <source>
        <tissue>Brain</tissue>
        <tissue>Lung</tissue>
        <tissue>Spleen</tissue>
    </source>
</reference>
<reference key="7">
    <citation type="journal article" date="2014" name="Cell Rep.">
        <title>Cytoskeletal regulation by AUTS2 in neuronal migration and neuritogenesis.</title>
        <authorList>
            <person name="Hori K."/>
            <person name="Nagai T."/>
            <person name="Shan W."/>
            <person name="Sakamoto A."/>
            <person name="Taya S."/>
            <person name="Hashimoto R."/>
            <person name="Hayashi T."/>
            <person name="Abe M."/>
            <person name="Yamazaki M."/>
            <person name="Nakao K."/>
            <person name="Nishioka T."/>
            <person name="Sakimura K."/>
            <person name="Yamada K."/>
            <person name="Kaibuchi K."/>
            <person name="Hoshino M."/>
        </authorList>
    </citation>
    <scope>INTERACTION WITH AUTS2</scope>
</reference>
<name>PREX1_MOUSE</name>
<keyword id="KW-0025">Alternative splicing</keyword>
<keyword id="KW-1003">Cell membrane</keyword>
<keyword id="KW-0963">Cytoplasm</keyword>
<keyword id="KW-0344">Guanine-nucleotide releasing factor</keyword>
<keyword id="KW-0472">Membrane</keyword>
<keyword id="KW-0597">Phosphoprotein</keyword>
<keyword id="KW-1185">Reference proteome</keyword>
<keyword id="KW-0677">Repeat</keyword>
<comment type="function">
    <text evidence="1 8">Functions as a RAC guanine nucleotide exchange factor (GEF), which activates the Rac proteins by exchanging bound GDP for free GTP. Its activity is synergistically activated by phosphatidylinositol 3,4,5-trisphosphate and the beta gamma subunits of heterotrimeric G protein. May function downstream of heterotrimeric G proteins in neutrophils (By similarity).</text>
</comment>
<comment type="subunit">
    <text evidence="8 9">Interacts preferentially with RAC2 (PubMed:16243036). Interacts with RAC1 (PubMed:16243036). Interacts with AUTS2 (PubMed:25533347).</text>
</comment>
<comment type="subcellular location">
    <subcellularLocation>
        <location>Cytoplasm</location>
        <location>Cytosol</location>
    </subcellularLocation>
    <subcellularLocation>
        <location>Cell membrane</location>
    </subcellularLocation>
    <text evidence="1">Mainly cytosolic. Some amount is apparently associated to the plasma membrane (By similarity).</text>
</comment>
<comment type="alternative products">
    <event type="alternative splicing"/>
    <isoform>
        <id>Q69ZK0-1</id>
        <name>1</name>
        <sequence type="displayed"/>
    </isoform>
    <isoform>
        <id>Q69ZK0-2</id>
        <name>2</name>
        <sequence type="described" ref="VSP_026436"/>
    </isoform>
</comment>
<comment type="sequence caution" evidence="11">
    <conflict type="erroneous initiation">
        <sequence resource="EMBL-CDS" id="BAD32446"/>
    </conflict>
</comment>
<proteinExistence type="evidence at protein level"/>
<gene>
    <name type="primary">Prex1</name>
    <name type="synonym">Kiaa1415</name>
</gene>
<sequence length="1650" mass="184935">MEAPGSGGGDGGGDPGGDGAHPDARGPVSGPCAAARDSERQLRLRLCVLNEILGTERDYVGTLRFLQSAFLQRIRQNVADSVEKGLTEENVKVLFSNIEDILEVHKDFLAALEYCLHPEPQSQHELGNVFLKFKDKFCVYEEYCSNHEKALRLLVELNKVPAVRAFLLSCMLLGGRKTTDIPLEGYLLSPIQRICKYPLLLKELAKRTPGKHPDHTAVQSALQAMKTVCSNINETKRQMEKLEALEQLQSHIEGWEGSNLTDICTELLLQGNLLKISAGNIQERAFFLFDNLLVYCKRKSRVTGSKKSTKRTKSINGSLYIFRGRINTEVMEVENVEDGTADYHSNGYTVTNGWKIHNTAKNKWFVCMAKTAEEKQKWLDALIREREQRESLKLGMERDAYVMIAEKGEKLYHMMMSKKVNLIKDRRRKLSTVPKCFLGNEFVAWLLEIGEISKTEEGVNLGQALLENGIIHHVSDKHQFKNEQVMYRFRYDDGTYKARSELEDIMSKGVRLYCRLHSLYAPVIKDRDYHLKTYKSVVPGSKLVDWLLAQGDCQTREEAVALGVGLCNNGFMHHVLEKSEFKDESQYFRFHADEEMEGTSSKNKQLRNDFKLVENILAKRLLIPPQEDDYGFDLEEKNKAVVVKSVQRGSLAEMAGLQAGRKIYSINEDLVFLRPFSEVETILNQFFCSRRPLRLLVATKAKETIKVPDHPEALSFQIRGTAPPCVFAVGRGSEAVAAGLCAGQCILKVNGTSVANDGALEVLEHFQAFRNHREEALGLYQWVYHSHEDAQLARASQGAPDEDPQEDDQPDSALPLLSLGPQLSLHEDSAVVSLTLDNVHLEHGVVYEYMSTAGAKCHVLEKIVEPRGCFRLAAKILEAFAVDDSIFVQNCGRLMAMSSAIVTMSHYEFHNICDTKLESIGQRIACYQEFAAQLKSRVSPPFKQASLEPHPLCGLDFCPTNCHVNLMEVSYPKTTPSVGRSFSIRFGRKPSLIGLDPEQGLNPMAYTQHCITTMAAPSWKCSPAVDEDSQGQGLNDSSYGSASGAPSQQDRGLSFLLKQEDREIQDAYLQLFTKLDVALKEMKQYVTQINRLLSTITEPTSAAPAPCDPSLVEETSSSPPVSEESEVDRTDHSGIKKVCFKVSEDEQEDSGHDTMSYRDSYSECNSNRDSVLSYTSVRSNSSYLGSDEMGSGDELPCDMRIPSDKQDKLHGCLEHLFNQVDSIHALLKGPVMSRAFEETRHFPMKHSWQEFKQKEECTVRGRNLIQISIQEDPWNLPSSIRTLVDNIQQYVEDGKNQLLLALLKCTDTELQLRRDAVFCQALVAAVCTFSEQLLAALDYRYNNNGEYEESSRDASRKWLEQVAATGVLLHWQSLLAPASVKEERTMLEDIWVTLSELDNVTFSFKQLDENSVANTNVFYHIEGSRQALKVVFYLDGFHFSRLPSRLEGGASLRLHTVLFTKALESVEGPPPPGNQAAEELQQEINAQSLEKVQQYYRKLRAFYLERSNLPTDAGATAVKIDQLIRPINALDELYRLMKTFVHPKAGAAGSLGAGLIPVSSELCYRLGACQITMCGTGMQRSTLSVSLEQAAILARSHGLLPKCVMQATDIMRKQGPRVEILAKNLRIKDPMPQGAPRLYQLCQPPVDGDL</sequence>
<evidence type="ECO:0000250" key="1"/>
<evidence type="ECO:0000250" key="2">
    <source>
        <dbReference type="UniProtKB" id="Q8TCU6"/>
    </source>
</evidence>
<evidence type="ECO:0000255" key="3">
    <source>
        <dbReference type="PROSITE-ProRule" id="PRU00062"/>
    </source>
</evidence>
<evidence type="ECO:0000255" key="4">
    <source>
        <dbReference type="PROSITE-ProRule" id="PRU00066"/>
    </source>
</evidence>
<evidence type="ECO:0000255" key="5">
    <source>
        <dbReference type="PROSITE-ProRule" id="PRU00143"/>
    </source>
</evidence>
<evidence type="ECO:0000255" key="6">
    <source>
        <dbReference type="PROSITE-ProRule" id="PRU00145"/>
    </source>
</evidence>
<evidence type="ECO:0000256" key="7">
    <source>
        <dbReference type="SAM" id="MobiDB-lite"/>
    </source>
</evidence>
<evidence type="ECO:0000269" key="8">
    <source>
    </source>
</evidence>
<evidence type="ECO:0000269" key="9">
    <source>
    </source>
</evidence>
<evidence type="ECO:0000303" key="10">
    <source>
    </source>
</evidence>
<evidence type="ECO:0000305" key="11"/>
<evidence type="ECO:0007744" key="12">
    <source>
    </source>
</evidence>
<feature type="chain" id="PRO_0000292674" description="Phosphatidylinositol 3,4,5-trisphosphate-dependent Rac exchanger 1 protein">
    <location>
        <begin position="1"/>
        <end position="1650"/>
    </location>
</feature>
<feature type="domain" description="DH" evidence="3">
    <location>
        <begin position="44"/>
        <end position="235"/>
    </location>
</feature>
<feature type="domain" description="PH" evidence="6">
    <location>
        <begin position="266"/>
        <end position="387"/>
    </location>
</feature>
<feature type="domain" description="DEP 1" evidence="4">
    <location>
        <begin position="416"/>
        <end position="491"/>
    </location>
</feature>
<feature type="domain" description="DEP 2" evidence="4">
    <location>
        <begin position="518"/>
        <end position="592"/>
    </location>
</feature>
<feature type="domain" description="PDZ" evidence="5">
    <location>
        <begin position="620"/>
        <end position="698"/>
    </location>
</feature>
<feature type="region of interest" description="Disordered" evidence="7">
    <location>
        <begin position="1"/>
        <end position="33"/>
    </location>
</feature>
<feature type="region of interest" description="Disordered" evidence="7">
    <location>
        <begin position="793"/>
        <end position="813"/>
    </location>
</feature>
<feature type="region of interest" description="Disordered" evidence="7">
    <location>
        <begin position="1022"/>
        <end position="1047"/>
    </location>
</feature>
<feature type="region of interest" description="Disordered" evidence="7">
    <location>
        <begin position="1099"/>
        <end position="1129"/>
    </location>
</feature>
<feature type="compositionally biased region" description="Gly residues" evidence="7">
    <location>
        <begin position="1"/>
        <end position="19"/>
    </location>
</feature>
<feature type="compositionally biased region" description="Acidic residues" evidence="7">
    <location>
        <begin position="800"/>
        <end position="810"/>
    </location>
</feature>
<feature type="compositionally biased region" description="Polar residues" evidence="7">
    <location>
        <begin position="1030"/>
        <end position="1047"/>
    </location>
</feature>
<feature type="compositionally biased region" description="Low complexity" evidence="7">
    <location>
        <begin position="1109"/>
        <end position="1122"/>
    </location>
</feature>
<feature type="modified residue" description="Phosphoserine" evidence="2">
    <location>
        <position position="314"/>
    </location>
</feature>
<feature type="modified residue" description="Phosphoserine" evidence="12">
    <location>
        <position position="991"/>
    </location>
</feature>
<feature type="modified residue" description="Phosphoserine" evidence="12">
    <location>
        <position position="1186"/>
    </location>
</feature>
<feature type="modified residue" description="Phosphoserine" evidence="12">
    <location>
        <position position="1191"/>
    </location>
</feature>
<feature type="splice variant" id="VSP_026436" description="In isoform 2." evidence="10">
    <location>
        <begin position="1"/>
        <end position="1188"/>
    </location>
</feature>
<feature type="sequence conflict" description="In Ref. 4; AAH57617." evidence="11" ref="4">
    <original>G</original>
    <variation>V</variation>
    <location>
        <position position="1575"/>
    </location>
</feature>
<accession>Q69ZK0</accession>
<accession>A2A5U1</accession>
<accession>Q6PFD4</accession>
<accession>Q8BN08</accession>
<protein>
    <recommendedName>
        <fullName>Phosphatidylinositol 3,4,5-trisphosphate-dependent Rac exchanger 1 protein</fullName>
        <shortName>P-Rex1</shortName>
        <shortName>PtdIns(3,4,5)-dependent Rac exchanger 1</shortName>
    </recommendedName>
</protein>
<organism>
    <name type="scientific">Mus musculus</name>
    <name type="common">Mouse</name>
    <dbReference type="NCBI Taxonomy" id="10090"/>
    <lineage>
        <taxon>Eukaryota</taxon>
        <taxon>Metazoa</taxon>
        <taxon>Chordata</taxon>
        <taxon>Craniata</taxon>
        <taxon>Vertebrata</taxon>
        <taxon>Euteleostomi</taxon>
        <taxon>Mammalia</taxon>
        <taxon>Eutheria</taxon>
        <taxon>Euarchontoglires</taxon>
        <taxon>Glires</taxon>
        <taxon>Rodentia</taxon>
        <taxon>Myomorpha</taxon>
        <taxon>Muroidea</taxon>
        <taxon>Muridae</taxon>
        <taxon>Murinae</taxon>
        <taxon>Mus</taxon>
        <taxon>Mus</taxon>
    </lineage>
</organism>